<keyword id="KW-1185">Reference proteome</keyword>
<proteinExistence type="inferred from homology"/>
<feature type="chain" id="PRO_0000309424" description="UPF0502 protein Sden_2282">
    <location>
        <begin position="1"/>
        <end position="233"/>
    </location>
</feature>
<feature type="region of interest" description="Disordered" evidence="2">
    <location>
        <begin position="178"/>
        <end position="204"/>
    </location>
</feature>
<feature type="compositionally biased region" description="Polar residues" evidence="2">
    <location>
        <begin position="178"/>
        <end position="198"/>
    </location>
</feature>
<name>Y2282_SHEDO</name>
<comment type="similarity">
    <text evidence="1">Belongs to the UPF0502 family.</text>
</comment>
<comment type="sequence caution" evidence="3">
    <conflict type="erroneous initiation">
        <sequence resource="EMBL-CDS" id="ABE55562"/>
    </conflict>
</comment>
<accession>Q12LW4</accession>
<gene>
    <name type="ordered locus">Sden_2282</name>
</gene>
<dbReference type="EMBL" id="CP000302">
    <property type="protein sequence ID" value="ABE55562.1"/>
    <property type="status" value="ALT_INIT"/>
    <property type="molecule type" value="Genomic_DNA"/>
</dbReference>
<dbReference type="RefSeq" id="WP_041405789.1">
    <property type="nucleotide sequence ID" value="NC_007954.1"/>
</dbReference>
<dbReference type="SMR" id="Q12LW4"/>
<dbReference type="STRING" id="318161.Sden_2282"/>
<dbReference type="KEGG" id="sdn:Sden_2282"/>
<dbReference type="eggNOG" id="COG3132">
    <property type="taxonomic scope" value="Bacteria"/>
</dbReference>
<dbReference type="HOGENOM" id="CLU_057831_2_0_6"/>
<dbReference type="OrthoDB" id="9784785at2"/>
<dbReference type="Proteomes" id="UP000001982">
    <property type="component" value="Chromosome"/>
</dbReference>
<dbReference type="Gene3D" id="1.10.10.10">
    <property type="entry name" value="Winged helix-like DNA-binding domain superfamily/Winged helix DNA-binding domain"/>
    <property type="match status" value="2"/>
</dbReference>
<dbReference type="HAMAP" id="MF_01584">
    <property type="entry name" value="UPF0502"/>
    <property type="match status" value="1"/>
</dbReference>
<dbReference type="InterPro" id="IPR007432">
    <property type="entry name" value="DUF480"/>
</dbReference>
<dbReference type="InterPro" id="IPR036388">
    <property type="entry name" value="WH-like_DNA-bd_sf"/>
</dbReference>
<dbReference type="InterPro" id="IPR036390">
    <property type="entry name" value="WH_DNA-bd_sf"/>
</dbReference>
<dbReference type="PANTHER" id="PTHR38768">
    <property type="entry name" value="UPF0502 PROTEIN YCEH"/>
    <property type="match status" value="1"/>
</dbReference>
<dbReference type="PANTHER" id="PTHR38768:SF1">
    <property type="entry name" value="UPF0502 PROTEIN YCEH"/>
    <property type="match status" value="1"/>
</dbReference>
<dbReference type="Pfam" id="PF04337">
    <property type="entry name" value="DUF480"/>
    <property type="match status" value="1"/>
</dbReference>
<dbReference type="SUPFAM" id="SSF46785">
    <property type="entry name" value="Winged helix' DNA-binding domain"/>
    <property type="match status" value="2"/>
</dbReference>
<organism>
    <name type="scientific">Shewanella denitrificans (strain OS217 / ATCC BAA-1090 / DSM 15013)</name>
    <dbReference type="NCBI Taxonomy" id="318161"/>
    <lineage>
        <taxon>Bacteria</taxon>
        <taxon>Pseudomonadati</taxon>
        <taxon>Pseudomonadota</taxon>
        <taxon>Gammaproteobacteria</taxon>
        <taxon>Alteromonadales</taxon>
        <taxon>Shewanellaceae</taxon>
        <taxon>Shewanella</taxon>
    </lineage>
</organism>
<sequence>MELTEFEARVIGCLLEKEVTTPDQYPLSLNALTLACNQKSSREPVMSLTESQVQASLDELAKKRLVSEQSGFGSRVVKYKHRFCNTEFSELQFSSAELSLICLLLLRGPQTPGELKSRSQRLHEFSHVSEVEHCLYSLSQSDKPHVAMLAREPNKREHRYIELFSHGVSEALTLAADTQHQRPPQTPHLSSRTNVDNSYESDERFTQLEGRINQLEQQVASLEAKLLGLLSNT</sequence>
<reference key="1">
    <citation type="submission" date="2006-03" db="EMBL/GenBank/DDBJ databases">
        <title>Complete sequence of Shewanella denitrificans OS217.</title>
        <authorList>
            <consortium name="US DOE Joint Genome Institute"/>
            <person name="Copeland A."/>
            <person name="Lucas S."/>
            <person name="Lapidus A."/>
            <person name="Barry K."/>
            <person name="Detter J.C."/>
            <person name="Glavina del Rio T."/>
            <person name="Hammon N."/>
            <person name="Israni S."/>
            <person name="Dalin E."/>
            <person name="Tice H."/>
            <person name="Pitluck S."/>
            <person name="Brettin T."/>
            <person name="Bruce D."/>
            <person name="Han C."/>
            <person name="Tapia R."/>
            <person name="Gilna P."/>
            <person name="Kiss H."/>
            <person name="Schmutz J."/>
            <person name="Larimer F."/>
            <person name="Land M."/>
            <person name="Hauser L."/>
            <person name="Kyrpides N."/>
            <person name="Lykidis A."/>
            <person name="Richardson P."/>
        </authorList>
    </citation>
    <scope>NUCLEOTIDE SEQUENCE [LARGE SCALE GENOMIC DNA]</scope>
    <source>
        <strain>OS217 / ATCC BAA-1090 / DSM 15013</strain>
    </source>
</reference>
<protein>
    <recommendedName>
        <fullName evidence="1">UPF0502 protein Sden_2282</fullName>
    </recommendedName>
</protein>
<evidence type="ECO:0000255" key="1">
    <source>
        <dbReference type="HAMAP-Rule" id="MF_01584"/>
    </source>
</evidence>
<evidence type="ECO:0000256" key="2">
    <source>
        <dbReference type="SAM" id="MobiDB-lite"/>
    </source>
</evidence>
<evidence type="ECO:0000305" key="3"/>